<comment type="function">
    <text evidence="2 3">Not required for DIF-induced autophagic cell death and necrotic cell death.</text>
</comment>
<comment type="disruption phenotype">
    <text evidence="2 3">No change in morphology and persistence of induced-cell death.</text>
</comment>
<comment type="similarity">
    <text evidence="4">Belongs to the peptidase C14B family.</text>
</comment>
<sequence>MSETFIHSVSENQIIVNDLENNNDYDNEDNVFIDSSVYNQECFMEILKKLEDGKPIHEVVRFTSHSSYTHTIVKTIQGLFLYVVLKSVNIYGSYYDFQRYIGPSMMIGTYACPLYRVQYRINKNDSTGAIIKYSNNLDECETYFNHLCKVFNVLTKRLSLNSICCGVGLSDSFYLMNTKTIKKSSRTRISFIIGNSKYSQHRKLDGVINDVNSFYCALLGCSFHSDNIVWLIDSDLRTFYDKWYTFLQLVQSFQSYIEVVVYYAGHGRSDNGNLKLIMTDGNPVQLSIIASTLTESIKNSDSLCLFIVDCCRDGENVLPFHYPIESFDDKKNIAVLFACKYGELSYESLELNAGIFTRSFVKTITERKNNNISTICNLTDIAIKRIYKNYSGCSLIGNFDCSLLEF</sequence>
<gene>
    <name type="primary">pcp</name>
    <name type="ORF">DDB_G0293196</name>
</gene>
<reference key="1">
    <citation type="journal article" date="2000" name="Mol. Cell">
        <title>Identification of paracaspases and metacaspases. Two ancient families of caspase-like proteins, one of which plays a key role in MALT lymphoma.</title>
        <authorList>
            <person name="Uren A.G."/>
            <person name="O'Rourke K."/>
            <person name="Aravind L."/>
            <person name="Pisabarro M.T."/>
            <person name="Seshagiri S."/>
            <person name="Koonin E.V."/>
            <person name="Dixit V.M."/>
        </authorList>
    </citation>
    <scope>NUCLEOTIDE SEQUENCE [MRNA]</scope>
</reference>
<reference key="2">
    <citation type="journal article" date="2005" name="Nature">
        <title>The genome of the social amoeba Dictyostelium discoideum.</title>
        <authorList>
            <person name="Eichinger L."/>
            <person name="Pachebat J.A."/>
            <person name="Gloeckner G."/>
            <person name="Rajandream M.A."/>
            <person name="Sucgang R."/>
            <person name="Berriman M."/>
            <person name="Song J."/>
            <person name="Olsen R."/>
            <person name="Szafranski K."/>
            <person name="Xu Q."/>
            <person name="Tunggal B."/>
            <person name="Kummerfeld S."/>
            <person name="Madera M."/>
            <person name="Konfortov B.A."/>
            <person name="Rivero F."/>
            <person name="Bankier A.T."/>
            <person name="Lehmann R."/>
            <person name="Hamlin N."/>
            <person name="Davies R."/>
            <person name="Gaudet P."/>
            <person name="Fey P."/>
            <person name="Pilcher K."/>
            <person name="Chen G."/>
            <person name="Saunders D."/>
            <person name="Sodergren E.J."/>
            <person name="Davis P."/>
            <person name="Kerhornou A."/>
            <person name="Nie X."/>
            <person name="Hall N."/>
            <person name="Anjard C."/>
            <person name="Hemphill L."/>
            <person name="Bason N."/>
            <person name="Farbrother P."/>
            <person name="Desany B."/>
            <person name="Just E."/>
            <person name="Morio T."/>
            <person name="Rost R."/>
            <person name="Churcher C.M."/>
            <person name="Cooper J."/>
            <person name="Haydock S."/>
            <person name="van Driessche N."/>
            <person name="Cronin A."/>
            <person name="Goodhead I."/>
            <person name="Muzny D.M."/>
            <person name="Mourier T."/>
            <person name="Pain A."/>
            <person name="Lu M."/>
            <person name="Harper D."/>
            <person name="Lindsay R."/>
            <person name="Hauser H."/>
            <person name="James K.D."/>
            <person name="Quiles M."/>
            <person name="Madan Babu M."/>
            <person name="Saito T."/>
            <person name="Buchrieser C."/>
            <person name="Wardroper A."/>
            <person name="Felder M."/>
            <person name="Thangavelu M."/>
            <person name="Johnson D."/>
            <person name="Knights A."/>
            <person name="Loulseged H."/>
            <person name="Mungall K.L."/>
            <person name="Oliver K."/>
            <person name="Price C."/>
            <person name="Quail M.A."/>
            <person name="Urushihara H."/>
            <person name="Hernandez J."/>
            <person name="Rabbinowitsch E."/>
            <person name="Steffen D."/>
            <person name="Sanders M."/>
            <person name="Ma J."/>
            <person name="Kohara Y."/>
            <person name="Sharp S."/>
            <person name="Simmonds M.N."/>
            <person name="Spiegler S."/>
            <person name="Tivey A."/>
            <person name="Sugano S."/>
            <person name="White B."/>
            <person name="Walker D."/>
            <person name="Woodward J.R."/>
            <person name="Winckler T."/>
            <person name="Tanaka Y."/>
            <person name="Shaulsky G."/>
            <person name="Schleicher M."/>
            <person name="Weinstock G.M."/>
            <person name="Rosenthal A."/>
            <person name="Cox E.C."/>
            <person name="Chisholm R.L."/>
            <person name="Gibbs R.A."/>
            <person name="Loomis W.F."/>
            <person name="Platzer M."/>
            <person name="Kay R.R."/>
            <person name="Williams J.G."/>
            <person name="Dear P.H."/>
            <person name="Noegel A.A."/>
            <person name="Barrell B.G."/>
            <person name="Kuspa A."/>
        </authorList>
    </citation>
    <scope>NUCLEOTIDE SEQUENCE [LARGE SCALE GENOMIC DNA]</scope>
    <source>
        <strain>AX4</strain>
    </source>
</reference>
<reference key="3">
    <citation type="journal article" date="2004" name="J. Biol. Chem.">
        <title>Developmental cell death in dictyostelium does not require paracaspase.</title>
        <authorList>
            <person name="Roisin-Bouffay C."/>
            <person name="Luciani M.-F."/>
            <person name="Klein G."/>
            <person name="Levraud J.-P."/>
            <person name="Adam M."/>
            <person name="Golstein P."/>
        </authorList>
    </citation>
    <scope>FUNCTION</scope>
    <scope>DISRUPTION PHENOTYPE</scope>
</reference>
<reference key="4">
    <citation type="journal article" date="2007" name="Biochem. Biophys. Res. Commun.">
        <title>Autophagic or necrotic cell death in the absence of caspase and bcl-2 family members.</title>
        <authorList>
            <person name="Lam D."/>
            <person name="Levraud J.-P."/>
            <person name="Luciani M.-F."/>
            <person name="Golstein P."/>
        </authorList>
    </citation>
    <scope>FUNCTION</scope>
    <scope>DISRUPTION PHENOTYPE</scope>
</reference>
<feature type="chain" id="PRO_0000384450" description="Paracaspase">
    <location>
        <begin position="1"/>
        <end position="406"/>
    </location>
</feature>
<feature type="region of interest" description="Caspase-like" evidence="1">
    <location>
        <begin position="193"/>
        <end position="374"/>
    </location>
</feature>
<feature type="active site" evidence="1">
    <location>
        <position position="266"/>
    </location>
</feature>
<feature type="active site" evidence="1">
    <location>
        <position position="311"/>
    </location>
</feature>
<protein>
    <recommendedName>
        <fullName>Paracaspase</fullName>
        <ecNumber>3.4.22.-</ecNumber>
    </recommendedName>
</protein>
<dbReference type="EC" id="3.4.22.-"/>
<dbReference type="EMBL" id="AF316600">
    <property type="protein sequence ID" value="AAG38592.1"/>
    <property type="molecule type" value="mRNA"/>
</dbReference>
<dbReference type="EMBL" id="AAFI02000200">
    <property type="protein sequence ID" value="EAL60797.1"/>
    <property type="molecule type" value="Genomic_DNA"/>
</dbReference>
<dbReference type="RefSeq" id="XP_629249.1">
    <property type="nucleotide sequence ID" value="XM_629247.1"/>
</dbReference>
<dbReference type="SMR" id="Q9GPM2"/>
<dbReference type="FunCoup" id="Q9GPM2">
    <property type="interactions" value="13"/>
</dbReference>
<dbReference type="STRING" id="44689.Q9GPM2"/>
<dbReference type="MEROPS" id="C14.A07"/>
<dbReference type="PaxDb" id="44689-DDB0215375"/>
<dbReference type="EnsemblProtists" id="EAL60797">
    <property type="protein sequence ID" value="EAL60797"/>
    <property type="gene ID" value="DDB_G0293196"/>
</dbReference>
<dbReference type="GeneID" id="8629131"/>
<dbReference type="KEGG" id="ddi:DDB_G0293196"/>
<dbReference type="dictyBase" id="DDB_G0293196">
    <property type="gene designation" value="pcp"/>
</dbReference>
<dbReference type="VEuPathDB" id="AmoebaDB:DDB_G0293196"/>
<dbReference type="HOGENOM" id="CLU_678684_0_0_1"/>
<dbReference type="InParanoid" id="Q9GPM2"/>
<dbReference type="PRO" id="PR:Q9GPM2"/>
<dbReference type="Proteomes" id="UP000002195">
    <property type="component" value="Chromosome 6"/>
</dbReference>
<dbReference type="GO" id="GO:0031164">
    <property type="term" value="C:contractile vacuolar membrane"/>
    <property type="evidence" value="ECO:0000314"/>
    <property type="project" value="dictyBase"/>
</dbReference>
<dbReference type="GO" id="GO:0004197">
    <property type="term" value="F:cysteine-type endopeptidase activity"/>
    <property type="evidence" value="ECO:0007669"/>
    <property type="project" value="InterPro"/>
</dbReference>
<dbReference type="GO" id="GO:0033298">
    <property type="term" value="P:contractile vacuole organization"/>
    <property type="evidence" value="ECO:0000315"/>
    <property type="project" value="dictyBase"/>
</dbReference>
<dbReference type="GO" id="GO:0006508">
    <property type="term" value="P:proteolysis"/>
    <property type="evidence" value="ECO:0007669"/>
    <property type="project" value="UniProtKB-KW"/>
</dbReference>
<dbReference type="GO" id="GO:0006970">
    <property type="term" value="P:response to osmotic stress"/>
    <property type="evidence" value="ECO:0000315"/>
    <property type="project" value="dictyBase"/>
</dbReference>
<dbReference type="Gene3D" id="3.40.50.1460">
    <property type="match status" value="1"/>
</dbReference>
<dbReference type="InterPro" id="IPR029030">
    <property type="entry name" value="Caspase-like_dom_sf"/>
</dbReference>
<dbReference type="InterPro" id="IPR052039">
    <property type="entry name" value="Caspase-related_regulators"/>
</dbReference>
<dbReference type="InterPro" id="IPR011600">
    <property type="entry name" value="Pept_C14_caspase"/>
</dbReference>
<dbReference type="PANTHER" id="PTHR22576">
    <property type="entry name" value="MUCOSA ASSOCIATED LYMPHOID TISSUE LYMPHOMA TRANSLOCATION PROTEIN 1/PARACASPASE"/>
    <property type="match status" value="1"/>
</dbReference>
<dbReference type="PANTHER" id="PTHR22576:SF37">
    <property type="entry name" value="MUCOSA-ASSOCIATED LYMPHOID TISSUE LYMPHOMA TRANSLOCATION PROTEIN 1"/>
    <property type="match status" value="1"/>
</dbReference>
<dbReference type="Pfam" id="PF00656">
    <property type="entry name" value="Peptidase_C14"/>
    <property type="match status" value="1"/>
</dbReference>
<dbReference type="SUPFAM" id="SSF52129">
    <property type="entry name" value="Caspase-like"/>
    <property type="match status" value="1"/>
</dbReference>
<name>PCP_DICDI</name>
<evidence type="ECO:0000250" key="1"/>
<evidence type="ECO:0000269" key="2">
    <source>
    </source>
</evidence>
<evidence type="ECO:0000269" key="3">
    <source>
    </source>
</evidence>
<evidence type="ECO:0000305" key="4"/>
<accession>Q9GPM2</accession>
<accession>Q54C17</accession>
<keyword id="KW-0378">Hydrolase</keyword>
<keyword id="KW-0645">Protease</keyword>
<keyword id="KW-1185">Reference proteome</keyword>
<organism>
    <name type="scientific">Dictyostelium discoideum</name>
    <name type="common">Social amoeba</name>
    <dbReference type="NCBI Taxonomy" id="44689"/>
    <lineage>
        <taxon>Eukaryota</taxon>
        <taxon>Amoebozoa</taxon>
        <taxon>Evosea</taxon>
        <taxon>Eumycetozoa</taxon>
        <taxon>Dictyostelia</taxon>
        <taxon>Dictyosteliales</taxon>
        <taxon>Dictyosteliaceae</taxon>
        <taxon>Dictyostelium</taxon>
    </lineage>
</organism>
<proteinExistence type="evidence at transcript level"/>